<protein>
    <recommendedName>
        <fullName evidence="1">Photosystem II reaction center protein Psb30</fullName>
    </recommendedName>
    <alternativeName>
        <fullName evidence="1">Photosystem II reaction center protein Ycf12</fullName>
    </alternativeName>
</protein>
<proteinExistence type="inferred from homology"/>
<sequence>MINWQVIGQLIATGAIMLAGPAVIVLLALKKGNL</sequence>
<accession>P49529</accession>
<dbReference type="EMBL" id="Z67753">
    <property type="protein sequence ID" value="CAA91718.1"/>
    <property type="molecule type" value="Genomic_DNA"/>
</dbReference>
<dbReference type="PIR" id="S78345">
    <property type="entry name" value="S78345"/>
</dbReference>
<dbReference type="SMR" id="P49529"/>
<dbReference type="GO" id="GO:0009535">
    <property type="term" value="C:chloroplast thylakoid membrane"/>
    <property type="evidence" value="ECO:0007669"/>
    <property type="project" value="UniProtKB-SubCell"/>
</dbReference>
<dbReference type="GO" id="GO:0009523">
    <property type="term" value="C:photosystem II"/>
    <property type="evidence" value="ECO:0007669"/>
    <property type="project" value="UniProtKB-KW"/>
</dbReference>
<dbReference type="GO" id="GO:0015979">
    <property type="term" value="P:photosynthesis"/>
    <property type="evidence" value="ECO:0007669"/>
    <property type="project" value="UniProtKB-KW"/>
</dbReference>
<dbReference type="HAMAP" id="MF_01329">
    <property type="entry name" value="PSII_Psb30_Ycf12"/>
    <property type="match status" value="1"/>
</dbReference>
<dbReference type="InterPro" id="IPR010284">
    <property type="entry name" value="PSII_Ycf12_core-subunit"/>
</dbReference>
<dbReference type="NCBIfam" id="NF010239">
    <property type="entry name" value="PRK13686.1"/>
    <property type="match status" value="1"/>
</dbReference>
<dbReference type="Pfam" id="PF05969">
    <property type="entry name" value="PSII_Ycf12"/>
    <property type="match status" value="1"/>
</dbReference>
<feature type="chain" id="PRO_0000059034" description="Photosystem II reaction center protein Psb30">
    <location>
        <begin position="1"/>
        <end position="34"/>
    </location>
</feature>
<feature type="transmembrane region" description="Helical" evidence="1">
    <location>
        <begin position="6"/>
        <end position="26"/>
    </location>
</feature>
<geneLocation type="chloroplast"/>
<reference key="1">
    <citation type="journal article" date="1995" name="Plant Mol. Biol. Rep.">
        <title>The chloroplast genome of a chlorophyll a+c-containing alga, Odontella sinensis.</title>
        <authorList>
            <person name="Kowallik K.V."/>
            <person name="Stoebe B."/>
            <person name="Schaffran I."/>
            <person name="Kroth-Pancic P."/>
            <person name="Freier U."/>
        </authorList>
    </citation>
    <scope>NUCLEOTIDE SEQUENCE [LARGE SCALE GENOMIC DNA]</scope>
</reference>
<organism>
    <name type="scientific">Trieres chinensis</name>
    <name type="common">Marine centric diatom</name>
    <name type="synonym">Odontella sinensis</name>
    <dbReference type="NCBI Taxonomy" id="1514140"/>
    <lineage>
        <taxon>Eukaryota</taxon>
        <taxon>Sar</taxon>
        <taxon>Stramenopiles</taxon>
        <taxon>Ochrophyta</taxon>
        <taxon>Bacillariophyta</taxon>
        <taxon>Mediophyceae</taxon>
        <taxon>Biddulphiophycidae</taxon>
        <taxon>Eupodiscales</taxon>
        <taxon>Parodontellaceae</taxon>
        <taxon>Trieres</taxon>
    </lineage>
</organism>
<keyword id="KW-0150">Chloroplast</keyword>
<keyword id="KW-0472">Membrane</keyword>
<keyword id="KW-0602">Photosynthesis</keyword>
<keyword id="KW-0604">Photosystem II</keyword>
<keyword id="KW-0934">Plastid</keyword>
<keyword id="KW-0793">Thylakoid</keyword>
<keyword id="KW-0812">Transmembrane</keyword>
<keyword id="KW-1133">Transmembrane helix</keyword>
<comment type="function">
    <text evidence="1">A core subunit of photosystem II (PSII), probably helps stabilize the reaction center.</text>
</comment>
<comment type="subunit">
    <text evidence="1">PSII is composed of 1 copy each of membrane proteins PsbA, PsbB, PsbC, PsbD, PsbE, PsbF, PsbH, PsbI, PsbJ, PsbK, PsbL, PsbM, PsbT, PsbX, PsbY, PsbZ, Psb30/Ycf12, peripheral proteins of the oxygen-evolving complex and a large number of cofactors. It forms dimeric complexes.</text>
</comment>
<comment type="subcellular location">
    <subcellularLocation>
        <location evidence="1">Plastid</location>
        <location evidence="1">Chloroplast thylakoid membrane</location>
        <topology evidence="1">Single-pass membrane protein</topology>
    </subcellularLocation>
</comment>
<comment type="similarity">
    <text evidence="1">Belongs to the Psb30/Ycf12 family.</text>
</comment>
<name>PSB30_TRICV</name>
<evidence type="ECO:0000255" key="1">
    <source>
        <dbReference type="HAMAP-Rule" id="MF_01329"/>
    </source>
</evidence>
<gene>
    <name evidence="1" type="primary">psb30</name>
    <name evidence="1" type="synonym">ycf12</name>
</gene>